<organism>
    <name type="scientific">Paracoccus denitrificans (strain Pd 1222)</name>
    <dbReference type="NCBI Taxonomy" id="318586"/>
    <lineage>
        <taxon>Bacteria</taxon>
        <taxon>Pseudomonadati</taxon>
        <taxon>Pseudomonadota</taxon>
        <taxon>Alphaproteobacteria</taxon>
        <taxon>Rhodobacterales</taxon>
        <taxon>Paracoccaceae</taxon>
        <taxon>Paracoccus</taxon>
    </lineage>
</organism>
<feature type="chain" id="PRO_1000011028" description="N-acetyl-gamma-glutamyl-phosphate reductase">
    <location>
        <begin position="1"/>
        <end position="342"/>
    </location>
</feature>
<feature type="active site" evidence="1">
    <location>
        <position position="149"/>
    </location>
</feature>
<sequence>MTLKAAILGASGYTGAELVRILATHPRIEIAALSADRKAGQGYDEVFPHLRHLKLPALVRMEEIDFSAIDLVFCALPHGLSQPLVGQLPRNVKIVDLGADFRLRDPADYKKWYGLDHAAPEVQPEAVYGLTEFYRDQIRGARLVAGTGCNAATVQFALRPLIGSGLIDLDDIICDLKNGVSGAGRSLKENMLFAERSEDVAGYSQGGKHRHLGEFDQEFSVLAGREVRIQFTPHLVPVNRGILASCYLKGEPQAVHAALAAAYADEPFIVVLPYGQLPAMAHVQGSNFCHIGVTGDRISGRALVVSTLDNLCKGSSGQAVQNANLMLGLPETEGLMLAPIFP</sequence>
<reference key="1">
    <citation type="submission" date="2006-12" db="EMBL/GenBank/DDBJ databases">
        <title>Complete sequence of chromosome 1 of Paracoccus denitrificans PD1222.</title>
        <authorList>
            <person name="Copeland A."/>
            <person name="Lucas S."/>
            <person name="Lapidus A."/>
            <person name="Barry K."/>
            <person name="Detter J.C."/>
            <person name="Glavina del Rio T."/>
            <person name="Hammon N."/>
            <person name="Israni S."/>
            <person name="Dalin E."/>
            <person name="Tice H."/>
            <person name="Pitluck S."/>
            <person name="Munk A.C."/>
            <person name="Brettin T."/>
            <person name="Bruce D."/>
            <person name="Han C."/>
            <person name="Tapia R."/>
            <person name="Gilna P."/>
            <person name="Schmutz J."/>
            <person name="Larimer F."/>
            <person name="Land M."/>
            <person name="Hauser L."/>
            <person name="Kyrpides N."/>
            <person name="Lykidis A."/>
            <person name="Spiro S."/>
            <person name="Richardson D.J."/>
            <person name="Moir J.W.B."/>
            <person name="Ferguson S.J."/>
            <person name="van Spanning R.J.M."/>
            <person name="Richardson P."/>
        </authorList>
    </citation>
    <scope>NUCLEOTIDE SEQUENCE [LARGE SCALE GENOMIC DNA]</scope>
    <source>
        <strain>Pd 1222</strain>
    </source>
</reference>
<proteinExistence type="inferred from homology"/>
<accession>A1B2K9</accession>
<keyword id="KW-0028">Amino-acid biosynthesis</keyword>
<keyword id="KW-0055">Arginine biosynthesis</keyword>
<keyword id="KW-0963">Cytoplasm</keyword>
<keyword id="KW-0521">NADP</keyword>
<keyword id="KW-0560">Oxidoreductase</keyword>
<keyword id="KW-1185">Reference proteome</keyword>
<comment type="function">
    <text evidence="1">Catalyzes the NADPH-dependent reduction of N-acetyl-5-glutamyl phosphate to yield N-acetyl-L-glutamate 5-semialdehyde.</text>
</comment>
<comment type="catalytic activity">
    <reaction evidence="1">
        <text>N-acetyl-L-glutamate 5-semialdehyde + phosphate + NADP(+) = N-acetyl-L-glutamyl 5-phosphate + NADPH + H(+)</text>
        <dbReference type="Rhea" id="RHEA:21588"/>
        <dbReference type="ChEBI" id="CHEBI:15378"/>
        <dbReference type="ChEBI" id="CHEBI:29123"/>
        <dbReference type="ChEBI" id="CHEBI:43474"/>
        <dbReference type="ChEBI" id="CHEBI:57783"/>
        <dbReference type="ChEBI" id="CHEBI:57936"/>
        <dbReference type="ChEBI" id="CHEBI:58349"/>
        <dbReference type="EC" id="1.2.1.38"/>
    </reaction>
</comment>
<comment type="pathway">
    <text evidence="1">Amino-acid biosynthesis; L-arginine biosynthesis; N(2)-acetyl-L-ornithine from L-glutamate: step 3/4.</text>
</comment>
<comment type="subcellular location">
    <subcellularLocation>
        <location evidence="1">Cytoplasm</location>
    </subcellularLocation>
</comment>
<comment type="similarity">
    <text evidence="1">Belongs to the NAGSA dehydrogenase family. Type 1 subfamily.</text>
</comment>
<evidence type="ECO:0000255" key="1">
    <source>
        <dbReference type="HAMAP-Rule" id="MF_00150"/>
    </source>
</evidence>
<gene>
    <name evidence="1" type="primary">argC</name>
    <name type="ordered locus">Pden_1656</name>
</gene>
<name>ARGC_PARDP</name>
<protein>
    <recommendedName>
        <fullName evidence="1">N-acetyl-gamma-glutamyl-phosphate reductase</fullName>
        <shortName evidence="1">AGPR</shortName>
        <ecNumber evidence="1">1.2.1.38</ecNumber>
    </recommendedName>
    <alternativeName>
        <fullName evidence="1">N-acetyl-glutamate semialdehyde dehydrogenase</fullName>
        <shortName evidence="1">NAGSA dehydrogenase</shortName>
    </alternativeName>
</protein>
<dbReference type="EC" id="1.2.1.38" evidence="1"/>
<dbReference type="EMBL" id="CP000489">
    <property type="protein sequence ID" value="ABL69753.1"/>
    <property type="molecule type" value="Genomic_DNA"/>
</dbReference>
<dbReference type="RefSeq" id="WP_011747951.1">
    <property type="nucleotide sequence ID" value="NC_008686.1"/>
</dbReference>
<dbReference type="SMR" id="A1B2K9"/>
<dbReference type="STRING" id="318586.Pden_1656"/>
<dbReference type="EnsemblBacteria" id="ABL69753">
    <property type="protein sequence ID" value="ABL69753"/>
    <property type="gene ID" value="Pden_1656"/>
</dbReference>
<dbReference type="GeneID" id="93450048"/>
<dbReference type="KEGG" id="pde:Pden_1656"/>
<dbReference type="eggNOG" id="COG0002">
    <property type="taxonomic scope" value="Bacteria"/>
</dbReference>
<dbReference type="HOGENOM" id="CLU_006384_0_1_5"/>
<dbReference type="OrthoDB" id="9801289at2"/>
<dbReference type="UniPathway" id="UPA00068">
    <property type="reaction ID" value="UER00108"/>
</dbReference>
<dbReference type="Proteomes" id="UP000000361">
    <property type="component" value="Chromosome 1"/>
</dbReference>
<dbReference type="GO" id="GO:0005737">
    <property type="term" value="C:cytoplasm"/>
    <property type="evidence" value="ECO:0007669"/>
    <property type="project" value="UniProtKB-SubCell"/>
</dbReference>
<dbReference type="GO" id="GO:0003942">
    <property type="term" value="F:N-acetyl-gamma-glutamyl-phosphate reductase activity"/>
    <property type="evidence" value="ECO:0007669"/>
    <property type="project" value="UniProtKB-UniRule"/>
</dbReference>
<dbReference type="GO" id="GO:0051287">
    <property type="term" value="F:NAD binding"/>
    <property type="evidence" value="ECO:0007669"/>
    <property type="project" value="InterPro"/>
</dbReference>
<dbReference type="GO" id="GO:0070401">
    <property type="term" value="F:NADP+ binding"/>
    <property type="evidence" value="ECO:0007669"/>
    <property type="project" value="InterPro"/>
</dbReference>
<dbReference type="GO" id="GO:0006526">
    <property type="term" value="P:L-arginine biosynthetic process"/>
    <property type="evidence" value="ECO:0007669"/>
    <property type="project" value="UniProtKB-UniRule"/>
</dbReference>
<dbReference type="CDD" id="cd23934">
    <property type="entry name" value="AGPR_1_C"/>
    <property type="match status" value="1"/>
</dbReference>
<dbReference type="CDD" id="cd17895">
    <property type="entry name" value="AGPR_1_N"/>
    <property type="match status" value="1"/>
</dbReference>
<dbReference type="Gene3D" id="3.30.360.10">
    <property type="entry name" value="Dihydrodipicolinate Reductase, domain 2"/>
    <property type="match status" value="1"/>
</dbReference>
<dbReference type="Gene3D" id="3.40.50.720">
    <property type="entry name" value="NAD(P)-binding Rossmann-like Domain"/>
    <property type="match status" value="1"/>
</dbReference>
<dbReference type="HAMAP" id="MF_00150">
    <property type="entry name" value="ArgC_type1"/>
    <property type="match status" value="1"/>
</dbReference>
<dbReference type="InterPro" id="IPR000706">
    <property type="entry name" value="AGPR_type-1"/>
</dbReference>
<dbReference type="InterPro" id="IPR036291">
    <property type="entry name" value="NAD(P)-bd_dom_sf"/>
</dbReference>
<dbReference type="InterPro" id="IPR050085">
    <property type="entry name" value="NAGSA_dehydrogenase"/>
</dbReference>
<dbReference type="InterPro" id="IPR000534">
    <property type="entry name" value="Semialdehyde_DH_NAD-bd"/>
</dbReference>
<dbReference type="NCBIfam" id="TIGR01850">
    <property type="entry name" value="argC"/>
    <property type="match status" value="1"/>
</dbReference>
<dbReference type="PANTHER" id="PTHR32338:SF10">
    <property type="entry name" value="N-ACETYL-GAMMA-GLUTAMYL-PHOSPHATE REDUCTASE, CHLOROPLASTIC-RELATED"/>
    <property type="match status" value="1"/>
</dbReference>
<dbReference type="PANTHER" id="PTHR32338">
    <property type="entry name" value="N-ACETYL-GAMMA-GLUTAMYL-PHOSPHATE REDUCTASE, CHLOROPLASTIC-RELATED-RELATED"/>
    <property type="match status" value="1"/>
</dbReference>
<dbReference type="Pfam" id="PF01118">
    <property type="entry name" value="Semialdhyde_dh"/>
    <property type="match status" value="1"/>
</dbReference>
<dbReference type="Pfam" id="PF22698">
    <property type="entry name" value="Semialdhyde_dhC_1"/>
    <property type="match status" value="1"/>
</dbReference>
<dbReference type="SMART" id="SM00859">
    <property type="entry name" value="Semialdhyde_dh"/>
    <property type="match status" value="1"/>
</dbReference>
<dbReference type="SUPFAM" id="SSF55347">
    <property type="entry name" value="Glyceraldehyde-3-phosphate dehydrogenase-like, C-terminal domain"/>
    <property type="match status" value="1"/>
</dbReference>
<dbReference type="SUPFAM" id="SSF51735">
    <property type="entry name" value="NAD(P)-binding Rossmann-fold domains"/>
    <property type="match status" value="1"/>
</dbReference>